<proteinExistence type="inferred from homology"/>
<feature type="chain" id="PRO_0000215157" description="Signal peptidase complex subunit 1">
    <location>
        <begin position="1"/>
        <end position="113"/>
    </location>
</feature>
<feature type="topological domain" description="Cytoplasmic" evidence="2">
    <location>
        <begin position="1"/>
        <end position="32"/>
    </location>
</feature>
<feature type="transmembrane region" description="Helical" evidence="4">
    <location>
        <begin position="33"/>
        <end position="53"/>
    </location>
</feature>
<feature type="topological domain" description="Lumenal" evidence="2">
    <location>
        <begin position="54"/>
        <end position="57"/>
    </location>
</feature>
<feature type="transmembrane region" description="Helical" evidence="4">
    <location>
        <begin position="58"/>
        <end position="78"/>
    </location>
</feature>
<feature type="topological domain" description="Cytoplasmic" evidence="2">
    <location>
        <begin position="79"/>
        <end position="113"/>
    </location>
</feature>
<feature type="region of interest" description="Disordered" evidence="5">
    <location>
        <begin position="89"/>
        <end position="113"/>
    </location>
</feature>
<reference key="1">
    <citation type="journal article" date="2003" name="PLoS Biol.">
        <title>The genome sequence of Caenorhabditis briggsae: a platform for comparative genomics.</title>
        <authorList>
            <person name="Stein L.D."/>
            <person name="Bao Z."/>
            <person name="Blasiar D."/>
            <person name="Blumenthal T."/>
            <person name="Brent M.R."/>
            <person name="Chen N."/>
            <person name="Chinwalla A."/>
            <person name="Clarke L."/>
            <person name="Clee C."/>
            <person name="Coghlan A."/>
            <person name="Coulson A."/>
            <person name="D'Eustachio P."/>
            <person name="Fitch D.H.A."/>
            <person name="Fulton L.A."/>
            <person name="Fulton R.E."/>
            <person name="Griffiths-Jones S."/>
            <person name="Harris T.W."/>
            <person name="Hillier L.W."/>
            <person name="Kamath R."/>
            <person name="Kuwabara P.E."/>
            <person name="Mardis E.R."/>
            <person name="Marra M.A."/>
            <person name="Miner T.L."/>
            <person name="Minx P."/>
            <person name="Mullikin J.C."/>
            <person name="Plumb R.W."/>
            <person name="Rogers J."/>
            <person name="Schein J.E."/>
            <person name="Sohrmann M."/>
            <person name="Spieth J."/>
            <person name="Stajich J.E."/>
            <person name="Wei C."/>
            <person name="Willey D."/>
            <person name="Wilson R.K."/>
            <person name="Durbin R.M."/>
            <person name="Waterston R.H."/>
        </authorList>
    </citation>
    <scope>NUCLEOTIDE SEQUENCE [LARGE SCALE GENOMIC DNA]</scope>
    <source>
        <strain>AF16</strain>
    </source>
</reference>
<comment type="function">
    <text evidence="1 3">Component of the signal peptidase complex (SPC) which catalyzes the cleavage of N-terminal signal sequences from nascent proteins as they are translocated into the lumen of the endoplasmic reticulum (By similarity). Dispensable for SPC enzymatic activity (By similarity).</text>
</comment>
<comment type="subunit">
    <text evidence="3">Component of the signal peptidase complex (SPC) composed of a catalytic subunit sec-11 and three accessory subunits spcs-1, spcs-2 and spcs-3. The complex induces a local thinning of the ER membrane which is used to measure the length of the signal peptide (SP) h-region of protein substrates. This ensures the selectivity of the complex towards h-regions shorter than 18-20 amino acids.</text>
</comment>
<comment type="subcellular location">
    <subcellularLocation>
        <location evidence="2">Endoplasmic reticulum membrane</location>
        <topology evidence="2">Multi-pass membrane protein</topology>
    </subcellularLocation>
</comment>
<comment type="similarity">
    <text evidence="6">Belongs to the SPCS1 family.</text>
</comment>
<accession>Q61CQ8</accession>
<accession>A8XFM9</accession>
<dbReference type="EMBL" id="HE600940">
    <property type="protein sequence ID" value="CAP31725.3"/>
    <property type="molecule type" value="Genomic_DNA"/>
</dbReference>
<dbReference type="RefSeq" id="XP_002640278.1">
    <property type="nucleotide sequence ID" value="XM_002640232.1"/>
</dbReference>
<dbReference type="SMR" id="Q61CQ8"/>
<dbReference type="FunCoup" id="Q61CQ8">
    <property type="interactions" value="1793"/>
</dbReference>
<dbReference type="STRING" id="6238.Q61CQ8"/>
<dbReference type="EnsemblMetazoa" id="CBG12804.1">
    <property type="protein sequence ID" value="CBG12804.1"/>
    <property type="gene ID" value="WBGene00033695"/>
</dbReference>
<dbReference type="GeneID" id="8582274"/>
<dbReference type="KEGG" id="cbr:CBG_12804"/>
<dbReference type="CTD" id="8582274"/>
<dbReference type="WormBase" id="CBG12804">
    <property type="protein sequence ID" value="CBP17677"/>
    <property type="gene ID" value="WBGene00033695"/>
    <property type="gene designation" value="Cbr-spcs-1"/>
</dbReference>
<dbReference type="eggNOG" id="KOG4112">
    <property type="taxonomic scope" value="Eukaryota"/>
</dbReference>
<dbReference type="HOGENOM" id="CLU_134505_1_1_1"/>
<dbReference type="InParanoid" id="Q61CQ8"/>
<dbReference type="OMA" id="IHLTLWT"/>
<dbReference type="OrthoDB" id="263893at2759"/>
<dbReference type="Proteomes" id="UP000008549">
    <property type="component" value="Unassembled WGS sequence"/>
</dbReference>
<dbReference type="GO" id="GO:0005787">
    <property type="term" value="C:signal peptidase complex"/>
    <property type="evidence" value="ECO:0000318"/>
    <property type="project" value="GO_Central"/>
</dbReference>
<dbReference type="GO" id="GO:0045047">
    <property type="term" value="P:protein targeting to ER"/>
    <property type="evidence" value="ECO:0000318"/>
    <property type="project" value="GO_Central"/>
</dbReference>
<dbReference type="GO" id="GO:0006465">
    <property type="term" value="P:signal peptide processing"/>
    <property type="evidence" value="ECO:0000318"/>
    <property type="project" value="GO_Central"/>
</dbReference>
<dbReference type="InterPro" id="IPR009542">
    <property type="entry name" value="Spc1/SPCS1"/>
</dbReference>
<dbReference type="PANTHER" id="PTHR13202">
    <property type="entry name" value="MICROSOMAL SIGNAL PEPTIDASE 12 KDA SUBUNIT"/>
    <property type="match status" value="1"/>
</dbReference>
<dbReference type="PANTHER" id="PTHR13202:SF0">
    <property type="entry name" value="SIGNAL PEPTIDASE COMPLEX SUBUNIT 1"/>
    <property type="match status" value="1"/>
</dbReference>
<dbReference type="Pfam" id="PF06645">
    <property type="entry name" value="SPC12"/>
    <property type="match status" value="1"/>
</dbReference>
<name>SPCS1_CAEBR</name>
<organism>
    <name type="scientific">Caenorhabditis briggsae</name>
    <dbReference type="NCBI Taxonomy" id="6238"/>
    <lineage>
        <taxon>Eukaryota</taxon>
        <taxon>Metazoa</taxon>
        <taxon>Ecdysozoa</taxon>
        <taxon>Nematoda</taxon>
        <taxon>Chromadorea</taxon>
        <taxon>Rhabditida</taxon>
        <taxon>Rhabditina</taxon>
        <taxon>Rhabditomorpha</taxon>
        <taxon>Rhabditoidea</taxon>
        <taxon>Rhabditidae</taxon>
        <taxon>Peloderinae</taxon>
        <taxon>Caenorhabditis</taxon>
    </lineage>
</organism>
<protein>
    <recommendedName>
        <fullName>Signal peptidase complex subunit 1</fullName>
    </recommendedName>
    <alternativeName>
        <fullName>Microsomal signal peptidase 12 kDa subunit</fullName>
        <shortName>SPase 12 kDa subunit</shortName>
    </alternativeName>
</protein>
<sequence length="113" mass="12729">MDGMIAMLPAPLQQLSSHIDFQGQKVAERTYQVILTLAGIIGFFVGYSTQQLSYAMYTVMGAAVFTALIILPPWPFLFRKNPIVWQTPIEEQEASSSSDNEKKDKKKETKKTK</sequence>
<evidence type="ECO:0000250" key="1">
    <source>
        <dbReference type="UniProtKB" id="P46965"/>
    </source>
</evidence>
<evidence type="ECO:0000250" key="2">
    <source>
        <dbReference type="UniProtKB" id="P83362"/>
    </source>
</evidence>
<evidence type="ECO:0000250" key="3">
    <source>
        <dbReference type="UniProtKB" id="Q9Y6A9"/>
    </source>
</evidence>
<evidence type="ECO:0000255" key="4"/>
<evidence type="ECO:0000256" key="5">
    <source>
        <dbReference type="SAM" id="MobiDB-lite"/>
    </source>
</evidence>
<evidence type="ECO:0000305" key="6"/>
<evidence type="ECO:0000312" key="7">
    <source>
        <dbReference type="WormBase" id="CBG12804"/>
    </source>
</evidence>
<keyword id="KW-0256">Endoplasmic reticulum</keyword>
<keyword id="KW-0472">Membrane</keyword>
<keyword id="KW-1185">Reference proteome</keyword>
<keyword id="KW-0812">Transmembrane</keyword>
<keyword id="KW-1133">Transmembrane helix</keyword>
<gene>
    <name evidence="7" type="primary">spcs-1</name>
    <name evidence="7" type="ORF">CBG12804</name>
</gene>